<keyword id="KW-0456">Lyase</keyword>
<comment type="function">
    <text evidence="1">Catalyzes the reaction of cyanate with bicarbonate to produce ammonia and carbon dioxide.</text>
</comment>
<comment type="catalytic activity">
    <reaction evidence="1">
        <text>cyanate + hydrogencarbonate + 3 H(+) = NH4(+) + 2 CO2</text>
        <dbReference type="Rhea" id="RHEA:11120"/>
        <dbReference type="ChEBI" id="CHEBI:15378"/>
        <dbReference type="ChEBI" id="CHEBI:16526"/>
        <dbReference type="ChEBI" id="CHEBI:17544"/>
        <dbReference type="ChEBI" id="CHEBI:28938"/>
        <dbReference type="ChEBI" id="CHEBI:29195"/>
        <dbReference type="EC" id="4.2.1.104"/>
    </reaction>
</comment>
<comment type="similarity">
    <text evidence="1">Belongs to the cyanase family.</text>
</comment>
<gene>
    <name evidence="1" type="primary">cynS</name>
    <name type="ordered locus">PSEEN3599</name>
</gene>
<dbReference type="EC" id="4.2.1.104" evidence="1"/>
<dbReference type="EMBL" id="CT573326">
    <property type="protein sequence ID" value="CAK16330.1"/>
    <property type="molecule type" value="Genomic_DNA"/>
</dbReference>
<dbReference type="RefSeq" id="WP_011534713.1">
    <property type="nucleotide sequence ID" value="NC_008027.1"/>
</dbReference>
<dbReference type="SMR" id="Q1I7P9"/>
<dbReference type="STRING" id="384676.PSEEN3599"/>
<dbReference type="GeneID" id="32806663"/>
<dbReference type="KEGG" id="pen:PSEEN3599"/>
<dbReference type="eggNOG" id="COG1513">
    <property type="taxonomic scope" value="Bacteria"/>
</dbReference>
<dbReference type="HOGENOM" id="CLU_103452_1_1_6"/>
<dbReference type="OrthoDB" id="9785870at2"/>
<dbReference type="Proteomes" id="UP000000658">
    <property type="component" value="Chromosome"/>
</dbReference>
<dbReference type="GO" id="GO:0008824">
    <property type="term" value="F:cyanate hydratase activity"/>
    <property type="evidence" value="ECO:0007669"/>
    <property type="project" value="UniProtKB-UniRule"/>
</dbReference>
<dbReference type="GO" id="GO:0003677">
    <property type="term" value="F:DNA binding"/>
    <property type="evidence" value="ECO:0007669"/>
    <property type="project" value="InterPro"/>
</dbReference>
<dbReference type="GO" id="GO:0009439">
    <property type="term" value="P:cyanate metabolic process"/>
    <property type="evidence" value="ECO:0007669"/>
    <property type="project" value="UniProtKB-UniRule"/>
</dbReference>
<dbReference type="CDD" id="cd00559">
    <property type="entry name" value="Cyanase_C"/>
    <property type="match status" value="1"/>
</dbReference>
<dbReference type="FunFam" id="3.30.1160.10:FF:000001">
    <property type="entry name" value="Cyanate hydratase"/>
    <property type="match status" value="1"/>
</dbReference>
<dbReference type="Gene3D" id="3.30.1160.10">
    <property type="entry name" value="Cyanate lyase, C-terminal domain"/>
    <property type="match status" value="1"/>
</dbReference>
<dbReference type="Gene3D" id="1.10.260.40">
    <property type="entry name" value="lambda repressor-like DNA-binding domains"/>
    <property type="match status" value="1"/>
</dbReference>
<dbReference type="HAMAP" id="MF_00535">
    <property type="entry name" value="Cyanate_hydrat"/>
    <property type="match status" value="1"/>
</dbReference>
<dbReference type="InterPro" id="IPR008076">
    <property type="entry name" value="Cyanase"/>
</dbReference>
<dbReference type="InterPro" id="IPR003712">
    <property type="entry name" value="Cyanate_lyase_C"/>
</dbReference>
<dbReference type="InterPro" id="IPR036581">
    <property type="entry name" value="Cyanate_lyase_C_sf"/>
</dbReference>
<dbReference type="InterPro" id="IPR048564">
    <property type="entry name" value="CYNS_N"/>
</dbReference>
<dbReference type="InterPro" id="IPR010982">
    <property type="entry name" value="Lambda_DNA-bd_dom_sf"/>
</dbReference>
<dbReference type="NCBIfam" id="TIGR00673">
    <property type="entry name" value="cynS"/>
    <property type="match status" value="1"/>
</dbReference>
<dbReference type="NCBIfam" id="NF002773">
    <property type="entry name" value="PRK02866.1"/>
    <property type="match status" value="1"/>
</dbReference>
<dbReference type="PANTHER" id="PTHR34186">
    <property type="entry name" value="CYANATE HYDRATASE"/>
    <property type="match status" value="1"/>
</dbReference>
<dbReference type="PANTHER" id="PTHR34186:SF2">
    <property type="entry name" value="CYANATE HYDRATASE"/>
    <property type="match status" value="1"/>
</dbReference>
<dbReference type="Pfam" id="PF02560">
    <property type="entry name" value="Cyanate_lyase"/>
    <property type="match status" value="1"/>
</dbReference>
<dbReference type="Pfam" id="PF21291">
    <property type="entry name" value="CYNS_N"/>
    <property type="match status" value="1"/>
</dbReference>
<dbReference type="PIRSF" id="PIRSF001263">
    <property type="entry name" value="Cyanate_hydratas"/>
    <property type="match status" value="1"/>
</dbReference>
<dbReference type="PRINTS" id="PR01693">
    <property type="entry name" value="CYANASE"/>
</dbReference>
<dbReference type="SMART" id="SM01116">
    <property type="entry name" value="Cyanate_lyase"/>
    <property type="match status" value="1"/>
</dbReference>
<dbReference type="SUPFAM" id="SSF55234">
    <property type="entry name" value="Cyanase C-terminal domain"/>
    <property type="match status" value="1"/>
</dbReference>
<dbReference type="SUPFAM" id="SSF47413">
    <property type="entry name" value="lambda repressor-like DNA-binding domains"/>
    <property type="match status" value="1"/>
</dbReference>
<evidence type="ECO:0000255" key="1">
    <source>
        <dbReference type="HAMAP-Rule" id="MF_00535"/>
    </source>
</evidence>
<feature type="chain" id="PRO_1000051484" description="Cyanate hydratase">
    <location>
        <begin position="1"/>
        <end position="156"/>
    </location>
</feature>
<feature type="active site" evidence="1">
    <location>
        <position position="96"/>
    </location>
</feature>
<feature type="active site" evidence="1">
    <location>
        <position position="99"/>
    </location>
</feature>
<feature type="active site" evidence="1">
    <location>
        <position position="122"/>
    </location>
</feature>
<organism>
    <name type="scientific">Pseudomonas entomophila (strain L48)</name>
    <dbReference type="NCBI Taxonomy" id="384676"/>
    <lineage>
        <taxon>Bacteria</taxon>
        <taxon>Pseudomonadati</taxon>
        <taxon>Pseudomonadota</taxon>
        <taxon>Gammaproteobacteria</taxon>
        <taxon>Pseudomonadales</taxon>
        <taxon>Pseudomonadaceae</taxon>
        <taxon>Pseudomonas</taxon>
    </lineage>
</organism>
<reference key="1">
    <citation type="journal article" date="2006" name="Nat. Biotechnol.">
        <title>Complete genome sequence of the entomopathogenic and metabolically versatile soil bacterium Pseudomonas entomophila.</title>
        <authorList>
            <person name="Vodovar N."/>
            <person name="Vallenet D."/>
            <person name="Cruveiller S."/>
            <person name="Rouy Z."/>
            <person name="Barbe V."/>
            <person name="Acosta C."/>
            <person name="Cattolico L."/>
            <person name="Jubin C."/>
            <person name="Lajus A."/>
            <person name="Segurens B."/>
            <person name="Vacherie B."/>
            <person name="Wincker P."/>
            <person name="Weissenbach J."/>
            <person name="Lemaitre B."/>
            <person name="Medigue C."/>
            <person name="Boccard F."/>
        </authorList>
    </citation>
    <scope>NUCLEOTIDE SEQUENCE [LARGE SCALE GENOMIC DNA]</scope>
    <source>
        <strain>L48</strain>
    </source>
</reference>
<name>CYNS_PSEE4</name>
<protein>
    <recommendedName>
        <fullName evidence="1">Cyanate hydratase</fullName>
        <shortName evidence="1">Cyanase</shortName>
        <ecNumber evidence="1">4.2.1.104</ecNumber>
    </recommendedName>
    <alternativeName>
        <fullName evidence="1">Cyanate hydrolase</fullName>
    </alternativeName>
    <alternativeName>
        <fullName evidence="1">Cyanate lyase</fullName>
    </alternativeName>
</protein>
<accession>Q1I7P9</accession>
<sequence length="156" mass="16637">MIQSQISQNARLALSEVILLAKARKDLSFAQITEGTGLSEAFVTAALLGQHPLPASAAQVVGDKLGLDADGIALLQTIPLRGSIQGGVPTDPTIYRFYEMLQVYGTTLKALVHEKFGDGIISAINFKLDVKKVDDPEGGSRAVITLDGKYLPTKPF</sequence>
<proteinExistence type="inferred from homology"/>